<accession>Q6MTF4</accession>
<reference key="1">
    <citation type="journal article" date="2004" name="Genome Res.">
        <title>The genome sequence of Mycoplasma mycoides subsp. mycoides SC type strain PG1T, the causative agent of contagious bovine pleuropneumonia (CBPP).</title>
        <authorList>
            <person name="Westberg J."/>
            <person name="Persson A."/>
            <person name="Holmberg A."/>
            <person name="Goesmann A."/>
            <person name="Lundeberg J."/>
            <person name="Johansson K.-E."/>
            <person name="Pettersson B."/>
            <person name="Uhlen M."/>
        </authorList>
    </citation>
    <scope>NUCLEOTIDE SEQUENCE [LARGE SCALE GENOMIC DNA]</scope>
    <source>
        <strain>CCUG 32753 / NCTC 10114 / PG1</strain>
    </source>
</reference>
<comment type="function">
    <text evidence="1">ATP-dependent serine protease that mediates the selective degradation of mutant and abnormal proteins as well as certain short-lived regulatory proteins. Required for cellular homeostasis and for survival from DNA damage and developmental changes induced by stress. Degrades polypeptides processively to yield small peptide fragments that are 5 to 10 amino acids long. Binds to DNA in a double-stranded, site-specific manner.</text>
</comment>
<comment type="catalytic activity">
    <reaction evidence="1">
        <text>Hydrolysis of proteins in presence of ATP.</text>
        <dbReference type="EC" id="3.4.21.53"/>
    </reaction>
</comment>
<comment type="subunit">
    <text evidence="1">Homohexamer. Organized in a ring with a central cavity.</text>
</comment>
<comment type="subcellular location">
    <subcellularLocation>
        <location evidence="1">Cytoplasm</location>
    </subcellularLocation>
</comment>
<comment type="induction">
    <text evidence="1">By heat shock.</text>
</comment>
<comment type="similarity">
    <text evidence="1">Belongs to the peptidase S16 family.</text>
</comment>
<organism>
    <name type="scientific">Mycoplasma mycoides subsp. mycoides SC (strain CCUG 32753 / NCTC 10114 / PG1)</name>
    <dbReference type="NCBI Taxonomy" id="272632"/>
    <lineage>
        <taxon>Bacteria</taxon>
        <taxon>Bacillati</taxon>
        <taxon>Mycoplasmatota</taxon>
        <taxon>Mollicutes</taxon>
        <taxon>Mycoplasmataceae</taxon>
        <taxon>Mycoplasma</taxon>
    </lineage>
</organism>
<proteinExistence type="inferred from homology"/>
<gene>
    <name evidence="1" type="primary">lon</name>
    <name type="ordered locus">MSC_0454</name>
</gene>
<feature type="chain" id="PRO_0000396583" description="Lon protease">
    <location>
        <begin position="1"/>
        <end position="796"/>
    </location>
</feature>
<feature type="domain" description="Lon N-terminal" evidence="3">
    <location>
        <begin position="19"/>
        <end position="213"/>
    </location>
</feature>
<feature type="domain" description="Lon proteolytic" evidence="2">
    <location>
        <begin position="612"/>
        <end position="793"/>
    </location>
</feature>
<feature type="active site" evidence="1">
    <location>
        <position position="699"/>
    </location>
</feature>
<feature type="active site" evidence="1">
    <location>
        <position position="742"/>
    </location>
</feature>
<feature type="binding site" evidence="1">
    <location>
        <begin position="376"/>
        <end position="383"/>
    </location>
    <ligand>
        <name>ATP</name>
        <dbReference type="ChEBI" id="CHEBI:30616"/>
    </ligand>
</feature>
<name>LON_MYCMS</name>
<evidence type="ECO:0000255" key="1">
    <source>
        <dbReference type="HAMAP-Rule" id="MF_01973"/>
    </source>
</evidence>
<evidence type="ECO:0000255" key="2">
    <source>
        <dbReference type="PROSITE-ProRule" id="PRU01122"/>
    </source>
</evidence>
<evidence type="ECO:0000255" key="3">
    <source>
        <dbReference type="PROSITE-ProRule" id="PRU01123"/>
    </source>
</evidence>
<keyword id="KW-0067">ATP-binding</keyword>
<keyword id="KW-0963">Cytoplasm</keyword>
<keyword id="KW-0378">Hydrolase</keyword>
<keyword id="KW-0547">Nucleotide-binding</keyword>
<keyword id="KW-0645">Protease</keyword>
<keyword id="KW-1185">Reference proteome</keyword>
<keyword id="KW-0720">Serine protease</keyword>
<keyword id="KW-0346">Stress response</keyword>
<dbReference type="EC" id="3.4.21.53" evidence="1"/>
<dbReference type="EMBL" id="BX293980">
    <property type="protein sequence ID" value="CAE77082.1"/>
    <property type="molecule type" value="Genomic_DNA"/>
</dbReference>
<dbReference type="RefSeq" id="NP_975440.1">
    <property type="nucleotide sequence ID" value="NC_005364.2"/>
</dbReference>
<dbReference type="SMR" id="Q6MTF4"/>
<dbReference type="STRING" id="272632.MSC_0454"/>
<dbReference type="MEROPS" id="S16.001"/>
<dbReference type="KEGG" id="mmy:MSC_0454"/>
<dbReference type="PATRIC" id="fig|272632.4.peg.494"/>
<dbReference type="eggNOG" id="COG0466">
    <property type="taxonomic scope" value="Bacteria"/>
</dbReference>
<dbReference type="HOGENOM" id="CLU_004109_4_3_14"/>
<dbReference type="Proteomes" id="UP000001016">
    <property type="component" value="Chromosome"/>
</dbReference>
<dbReference type="GO" id="GO:0005737">
    <property type="term" value="C:cytoplasm"/>
    <property type="evidence" value="ECO:0007669"/>
    <property type="project" value="UniProtKB-SubCell"/>
</dbReference>
<dbReference type="GO" id="GO:0005524">
    <property type="term" value="F:ATP binding"/>
    <property type="evidence" value="ECO:0007669"/>
    <property type="project" value="UniProtKB-UniRule"/>
</dbReference>
<dbReference type="GO" id="GO:0016887">
    <property type="term" value="F:ATP hydrolysis activity"/>
    <property type="evidence" value="ECO:0007669"/>
    <property type="project" value="UniProtKB-UniRule"/>
</dbReference>
<dbReference type="GO" id="GO:0004176">
    <property type="term" value="F:ATP-dependent peptidase activity"/>
    <property type="evidence" value="ECO:0007669"/>
    <property type="project" value="UniProtKB-UniRule"/>
</dbReference>
<dbReference type="GO" id="GO:0043565">
    <property type="term" value="F:sequence-specific DNA binding"/>
    <property type="evidence" value="ECO:0007669"/>
    <property type="project" value="UniProtKB-UniRule"/>
</dbReference>
<dbReference type="GO" id="GO:0004252">
    <property type="term" value="F:serine-type endopeptidase activity"/>
    <property type="evidence" value="ECO:0007669"/>
    <property type="project" value="UniProtKB-UniRule"/>
</dbReference>
<dbReference type="GO" id="GO:0034605">
    <property type="term" value="P:cellular response to heat"/>
    <property type="evidence" value="ECO:0007669"/>
    <property type="project" value="UniProtKB-UniRule"/>
</dbReference>
<dbReference type="GO" id="GO:0006515">
    <property type="term" value="P:protein quality control for misfolded or incompletely synthesized proteins"/>
    <property type="evidence" value="ECO:0007669"/>
    <property type="project" value="UniProtKB-UniRule"/>
</dbReference>
<dbReference type="CDD" id="cd19500">
    <property type="entry name" value="RecA-like_Lon"/>
    <property type="match status" value="1"/>
</dbReference>
<dbReference type="FunFam" id="3.40.50.300:FF:000021">
    <property type="entry name" value="Lon protease homolog"/>
    <property type="match status" value="1"/>
</dbReference>
<dbReference type="Gene3D" id="1.10.8.60">
    <property type="match status" value="1"/>
</dbReference>
<dbReference type="Gene3D" id="1.20.5.5270">
    <property type="match status" value="1"/>
</dbReference>
<dbReference type="Gene3D" id="1.20.58.1480">
    <property type="match status" value="1"/>
</dbReference>
<dbReference type="Gene3D" id="3.30.230.10">
    <property type="match status" value="1"/>
</dbReference>
<dbReference type="Gene3D" id="2.30.130.40">
    <property type="entry name" value="LON domain-like"/>
    <property type="match status" value="1"/>
</dbReference>
<dbReference type="Gene3D" id="3.40.50.300">
    <property type="entry name" value="P-loop containing nucleotide triphosphate hydrolases"/>
    <property type="match status" value="1"/>
</dbReference>
<dbReference type="HAMAP" id="MF_01973">
    <property type="entry name" value="lon_bact"/>
    <property type="match status" value="1"/>
</dbReference>
<dbReference type="InterPro" id="IPR003593">
    <property type="entry name" value="AAA+_ATPase"/>
</dbReference>
<dbReference type="InterPro" id="IPR003959">
    <property type="entry name" value="ATPase_AAA_core"/>
</dbReference>
<dbReference type="InterPro" id="IPR027543">
    <property type="entry name" value="Lon_bac"/>
</dbReference>
<dbReference type="InterPro" id="IPR004815">
    <property type="entry name" value="Lon_bac/euk-typ"/>
</dbReference>
<dbReference type="InterPro" id="IPR054594">
    <property type="entry name" value="Lon_lid"/>
</dbReference>
<dbReference type="InterPro" id="IPR008269">
    <property type="entry name" value="Lon_proteolytic"/>
</dbReference>
<dbReference type="InterPro" id="IPR027065">
    <property type="entry name" value="Lon_Prtase"/>
</dbReference>
<dbReference type="InterPro" id="IPR003111">
    <property type="entry name" value="Lon_prtase_N"/>
</dbReference>
<dbReference type="InterPro" id="IPR046336">
    <property type="entry name" value="Lon_prtase_N_sf"/>
</dbReference>
<dbReference type="InterPro" id="IPR027417">
    <property type="entry name" value="P-loop_NTPase"/>
</dbReference>
<dbReference type="InterPro" id="IPR008268">
    <property type="entry name" value="Peptidase_S16_AS"/>
</dbReference>
<dbReference type="InterPro" id="IPR015947">
    <property type="entry name" value="PUA-like_sf"/>
</dbReference>
<dbReference type="InterPro" id="IPR020568">
    <property type="entry name" value="Ribosomal_Su5_D2-typ_SF"/>
</dbReference>
<dbReference type="InterPro" id="IPR014721">
    <property type="entry name" value="Ribsml_uS5_D2-typ_fold_subgr"/>
</dbReference>
<dbReference type="NCBIfam" id="TIGR00763">
    <property type="entry name" value="lon"/>
    <property type="match status" value="1"/>
</dbReference>
<dbReference type="PANTHER" id="PTHR10046">
    <property type="entry name" value="ATP DEPENDENT LON PROTEASE FAMILY MEMBER"/>
    <property type="match status" value="1"/>
</dbReference>
<dbReference type="Pfam" id="PF00004">
    <property type="entry name" value="AAA"/>
    <property type="match status" value="1"/>
</dbReference>
<dbReference type="Pfam" id="PF05362">
    <property type="entry name" value="Lon_C"/>
    <property type="match status" value="1"/>
</dbReference>
<dbReference type="Pfam" id="PF22667">
    <property type="entry name" value="Lon_lid"/>
    <property type="match status" value="1"/>
</dbReference>
<dbReference type="Pfam" id="PF02190">
    <property type="entry name" value="LON_substr_bdg"/>
    <property type="match status" value="1"/>
</dbReference>
<dbReference type="PIRSF" id="PIRSF001174">
    <property type="entry name" value="Lon_proteas"/>
    <property type="match status" value="1"/>
</dbReference>
<dbReference type="PRINTS" id="PR00830">
    <property type="entry name" value="ENDOLAPTASE"/>
</dbReference>
<dbReference type="SMART" id="SM00382">
    <property type="entry name" value="AAA"/>
    <property type="match status" value="1"/>
</dbReference>
<dbReference type="SMART" id="SM00464">
    <property type="entry name" value="LON"/>
    <property type="match status" value="1"/>
</dbReference>
<dbReference type="SUPFAM" id="SSF52540">
    <property type="entry name" value="P-loop containing nucleoside triphosphate hydrolases"/>
    <property type="match status" value="1"/>
</dbReference>
<dbReference type="SUPFAM" id="SSF88697">
    <property type="entry name" value="PUA domain-like"/>
    <property type="match status" value="1"/>
</dbReference>
<dbReference type="SUPFAM" id="SSF54211">
    <property type="entry name" value="Ribosomal protein S5 domain 2-like"/>
    <property type="match status" value="1"/>
</dbReference>
<dbReference type="PROSITE" id="PS51787">
    <property type="entry name" value="LON_N"/>
    <property type="match status" value="1"/>
</dbReference>
<dbReference type="PROSITE" id="PS51786">
    <property type="entry name" value="LON_PROTEOLYTIC"/>
    <property type="match status" value="1"/>
</dbReference>
<dbReference type="PROSITE" id="PS01046">
    <property type="entry name" value="LON_SER"/>
    <property type="match status" value="1"/>
</dbReference>
<protein>
    <recommendedName>
        <fullName evidence="1">Lon protease</fullName>
        <ecNumber evidence="1">3.4.21.53</ecNumber>
    </recommendedName>
    <alternativeName>
        <fullName evidence="1">ATP-dependent protease La</fullName>
    </alternativeName>
</protein>
<sequence>MLQYLKKIKGVSFMKTIKLPVVVTRGIFILPSTSKTIEFGRVKSKNALDASADLYNNQIVVVSQESPLEEEPNLEHLFYLGTVADLSVKKVWKDGTISVELNYNQKIKIDEFVEEDNIIYAIGSVFEDKLPKTDAQKTKIKEALEELQEKHSFNTSELLLVFNENDFNKLNSLIYQIIDKMPLVSLNTKLLLIQSTSILEKLELLKELIINRPKSTIKLNNNLNNNSTVDSEINKKLKDKMDKQQKEYYLREKMRIIKEELDDENSDASQLDKYKKRLEEEPFPESVKEKILSSIKRIETMQPGSAEVNVERNYVDWMMSIPWWEQSEDIDDLKYAQEILEKHHFGLKKVKERIIEYLAVKQKTKSLKGPIITFVGPPGVGKTSLARSIAEALGKKFVKVSLGGVKDESEIRGHRKTYVGSMPGRIIQALKRAKVKNPLFLLDEIDKMASDNRGDPASAMLEVLDPEQNKEFSDHYIEEPYDLSTVMFIATANYIENIPEALYDRMEIINLSSYTEIEKMHIAKDYLTKKILEEDQLTEDELRFTDEAYDEIIKYYTREAGVRQLERHLATIARKFIVKLLNGEITNLVVTREVVVQYLGKHIFEHTSKEEESQVGVVTGLAYTQFGGDILPIEVSTYNGKGNLTLTGKLGEVMKESATIALTYVKANHEKFGISKDKFDDIDIHIHVPEGAVPKDGPSAGITLTTALISALSKQPVSKDFGMTGEITLRGNVLPIGGLREKSISAARSGLKHILIPSKNVKDIEDVPQEVQDVLKITPVSKYEDVYEIIFKNNNQ</sequence>